<proteinExistence type="evidence at protein level"/>
<name>PPAT_STAAN</name>
<keyword id="KW-0663">Pyridoxal phosphate</keyword>
<keyword id="KW-0808">Transferase</keyword>
<accession>P60120</accession>
<accession>Q99W59</accession>
<dbReference type="EC" id="2.3.1.-"/>
<dbReference type="EMBL" id="BA000018">
    <property type="protein sequence ID" value="BAB41739.1"/>
    <property type="status" value="ALT_INIT"/>
    <property type="molecule type" value="Genomic_DNA"/>
</dbReference>
<dbReference type="PIR" id="H89822">
    <property type="entry name" value="H89822"/>
</dbReference>
<dbReference type="RefSeq" id="WP_000250823.1">
    <property type="nucleotide sequence ID" value="NC_002745.2"/>
</dbReference>
<dbReference type="SMR" id="P60120"/>
<dbReference type="EnsemblBacteria" id="BAB41739">
    <property type="protein sequence ID" value="BAB41739"/>
    <property type="gene ID" value="BAB41739"/>
</dbReference>
<dbReference type="KEGG" id="sau:SA0508"/>
<dbReference type="HOGENOM" id="CLU_015846_11_0_9"/>
<dbReference type="GO" id="GO:0030170">
    <property type="term" value="F:pyridoxal phosphate binding"/>
    <property type="evidence" value="ECO:0007669"/>
    <property type="project" value="InterPro"/>
</dbReference>
<dbReference type="GO" id="GO:0016740">
    <property type="term" value="F:transferase activity"/>
    <property type="evidence" value="ECO:0007669"/>
    <property type="project" value="UniProtKB-KW"/>
</dbReference>
<dbReference type="GO" id="GO:0009058">
    <property type="term" value="P:biosynthetic process"/>
    <property type="evidence" value="ECO:0007669"/>
    <property type="project" value="InterPro"/>
</dbReference>
<dbReference type="CDD" id="cd06454">
    <property type="entry name" value="KBL_like"/>
    <property type="match status" value="1"/>
</dbReference>
<dbReference type="FunFam" id="3.40.640.10:FF:000006">
    <property type="entry name" value="5-aminolevulinate synthase, mitochondrial"/>
    <property type="match status" value="1"/>
</dbReference>
<dbReference type="Gene3D" id="3.90.1150.10">
    <property type="entry name" value="Aspartate Aminotransferase, domain 1"/>
    <property type="match status" value="1"/>
</dbReference>
<dbReference type="Gene3D" id="3.40.640.10">
    <property type="entry name" value="Type I PLP-dependent aspartate aminotransferase-like (Major domain)"/>
    <property type="match status" value="1"/>
</dbReference>
<dbReference type="InterPro" id="IPR001917">
    <property type="entry name" value="Aminotrans_II_pyridoxalP_BS"/>
</dbReference>
<dbReference type="InterPro" id="IPR004839">
    <property type="entry name" value="Aminotransferase_I/II_large"/>
</dbReference>
<dbReference type="InterPro" id="IPR050087">
    <property type="entry name" value="AON_synthase_class-II"/>
</dbReference>
<dbReference type="InterPro" id="IPR010962">
    <property type="entry name" value="AONS_Archaea/Firmicutes"/>
</dbReference>
<dbReference type="InterPro" id="IPR015424">
    <property type="entry name" value="PyrdxlP-dep_Trfase"/>
</dbReference>
<dbReference type="InterPro" id="IPR015421">
    <property type="entry name" value="PyrdxlP-dep_Trfase_major"/>
</dbReference>
<dbReference type="InterPro" id="IPR015422">
    <property type="entry name" value="PyrdxlP-dep_Trfase_small"/>
</dbReference>
<dbReference type="NCBIfam" id="TIGR01825">
    <property type="entry name" value="gly_Cac_T_rel"/>
    <property type="match status" value="1"/>
</dbReference>
<dbReference type="NCBIfam" id="NF005394">
    <property type="entry name" value="PRK06939.1"/>
    <property type="match status" value="1"/>
</dbReference>
<dbReference type="PANTHER" id="PTHR13693">
    <property type="entry name" value="CLASS II AMINOTRANSFERASE/8-AMINO-7-OXONONANOATE SYNTHASE"/>
    <property type="match status" value="1"/>
</dbReference>
<dbReference type="PANTHER" id="PTHR13693:SF3">
    <property type="entry name" value="LD36009P"/>
    <property type="match status" value="1"/>
</dbReference>
<dbReference type="Pfam" id="PF00155">
    <property type="entry name" value="Aminotran_1_2"/>
    <property type="match status" value="1"/>
</dbReference>
<dbReference type="SUPFAM" id="SSF53383">
    <property type="entry name" value="PLP-dependent transferases"/>
    <property type="match status" value="1"/>
</dbReference>
<dbReference type="PROSITE" id="PS00599">
    <property type="entry name" value="AA_TRANSFER_CLASS_2"/>
    <property type="match status" value="1"/>
</dbReference>
<feature type="chain" id="PRO_0000163839" description="Putative pyridoxal phosphate-dependent acyltransferase">
    <location>
        <begin position="1"/>
        <end position="395"/>
    </location>
</feature>
<feature type="binding site" evidence="1">
    <location>
        <begin position="110"/>
        <end position="111"/>
    </location>
    <ligand>
        <name>pyridoxal 5'-phosphate</name>
        <dbReference type="ChEBI" id="CHEBI:597326"/>
    </ligand>
</feature>
<feature type="binding site" evidence="1">
    <location>
        <position position="135"/>
    </location>
    <ligand>
        <name>substrate</name>
    </ligand>
</feature>
<feature type="binding site" evidence="1">
    <location>
        <position position="185"/>
    </location>
    <ligand>
        <name>pyridoxal 5'-phosphate</name>
        <dbReference type="ChEBI" id="CHEBI:597326"/>
    </ligand>
</feature>
<feature type="binding site" evidence="1">
    <location>
        <begin position="210"/>
        <end position="213"/>
    </location>
    <ligand>
        <name>pyridoxal 5'-phosphate</name>
        <dbReference type="ChEBI" id="CHEBI:597326"/>
    </ligand>
</feature>
<feature type="binding site" evidence="1">
    <location>
        <begin position="240"/>
        <end position="243"/>
    </location>
    <ligand>
        <name>pyridoxal 5'-phosphate</name>
        <dbReference type="ChEBI" id="CHEBI:597326"/>
    </ligand>
</feature>
<feature type="binding site" evidence="1">
    <location>
        <position position="357"/>
    </location>
    <ligand>
        <name>substrate</name>
    </ligand>
</feature>
<feature type="modified residue" description="N6-(pyridoxal phosphate)lysine" evidence="2">
    <location>
        <position position="243"/>
    </location>
</feature>
<protein>
    <recommendedName>
        <fullName>Putative pyridoxal phosphate-dependent acyltransferase</fullName>
        <ecNumber>2.3.1.-</ecNumber>
    </recommendedName>
</protein>
<reference key="1">
    <citation type="journal article" date="2001" name="Lancet">
        <title>Whole genome sequencing of meticillin-resistant Staphylococcus aureus.</title>
        <authorList>
            <person name="Kuroda M."/>
            <person name="Ohta T."/>
            <person name="Uchiyama I."/>
            <person name="Baba T."/>
            <person name="Yuzawa H."/>
            <person name="Kobayashi I."/>
            <person name="Cui L."/>
            <person name="Oguchi A."/>
            <person name="Aoki K."/>
            <person name="Nagai Y."/>
            <person name="Lian J.-Q."/>
            <person name="Ito T."/>
            <person name="Kanamori M."/>
            <person name="Matsumaru H."/>
            <person name="Maruyama A."/>
            <person name="Murakami H."/>
            <person name="Hosoyama A."/>
            <person name="Mizutani-Ui Y."/>
            <person name="Takahashi N.K."/>
            <person name="Sawano T."/>
            <person name="Inoue R."/>
            <person name="Kaito C."/>
            <person name="Sekimizu K."/>
            <person name="Hirakawa H."/>
            <person name="Kuhara S."/>
            <person name="Goto S."/>
            <person name="Yabuzaki J."/>
            <person name="Kanehisa M."/>
            <person name="Yamashita A."/>
            <person name="Oshima K."/>
            <person name="Furuya K."/>
            <person name="Yoshino C."/>
            <person name="Shiba T."/>
            <person name="Hattori M."/>
            <person name="Ogasawara N."/>
            <person name="Hayashi H."/>
            <person name="Hiramatsu K."/>
        </authorList>
    </citation>
    <scope>NUCLEOTIDE SEQUENCE [LARGE SCALE GENOMIC DNA]</scope>
    <source>
        <strain>N315</strain>
    </source>
</reference>
<reference key="2">
    <citation type="journal article" date="2005" name="J. Microbiol. Methods">
        <title>Correlation of proteomic and transcriptomic profiles of Staphylococcus aureus during the post-exponential phase of growth.</title>
        <authorList>
            <person name="Scherl A."/>
            <person name="Francois P."/>
            <person name="Bento M."/>
            <person name="Deshusses J.M."/>
            <person name="Charbonnier Y."/>
            <person name="Converset V."/>
            <person name="Huyghe A."/>
            <person name="Walter N."/>
            <person name="Hoogland C."/>
            <person name="Appel R.D."/>
            <person name="Sanchez J.-C."/>
            <person name="Zimmermann-Ivol C.G."/>
            <person name="Corthals G.L."/>
            <person name="Hochstrasser D.F."/>
            <person name="Schrenzel J."/>
        </authorList>
    </citation>
    <scope>IDENTIFICATION BY MASS SPECTROMETRY</scope>
    <source>
        <strain>N315</strain>
    </source>
</reference>
<reference key="3">
    <citation type="submission" date="2007-10" db="UniProtKB">
        <title>Shotgun proteomic analysis of total and membrane protein extracts of S. aureus strain N315.</title>
        <authorList>
            <person name="Vaezzadeh A.R."/>
            <person name="Deshusses J."/>
            <person name="Lescuyer P."/>
            <person name="Hochstrasser D.F."/>
        </authorList>
    </citation>
    <scope>IDENTIFICATION BY MASS SPECTROMETRY [LARGE SCALE ANALYSIS]</scope>
    <source>
        <strain>N315</strain>
    </source>
</reference>
<evidence type="ECO:0000250" key="1"/>
<evidence type="ECO:0000305" key="2"/>
<organism>
    <name type="scientific">Staphylococcus aureus (strain N315)</name>
    <dbReference type="NCBI Taxonomy" id="158879"/>
    <lineage>
        <taxon>Bacteria</taxon>
        <taxon>Bacillati</taxon>
        <taxon>Bacillota</taxon>
        <taxon>Bacilli</taxon>
        <taxon>Bacillales</taxon>
        <taxon>Staphylococcaceae</taxon>
        <taxon>Staphylococcus</taxon>
    </lineage>
</organism>
<sequence>MVQSLHEFLEENINYLKENGLYNEIDTIEGANGPEIKINGKSYINLSSNNYLGLATNEDLKSAAKAAIDTHGVGAGAVRTINGTLDLHDELEETLAKFKGTEAAIAYQSGFNCNMAAISAVMNKNDAILSDELNHASIIDGCRLSKAKIIRVNHSDMDDLRAKAKEAVESGQYNKVMYITDGVFSMDGDVAKLPEIVEIAEEFGLLTYVDDAHGSGVMGKGAGTVKHFGLQDKIDFQIGTLSKAIGVVGGYVAGTKELIDWLKAQSRPFLFSTSLAPGDTKAITEAVKKLMDSTELHDKLWDNAQYLKNGLSKLGYDTGESETPITPVIIGDEKTTQEFSKRLKDEGVYVKSIVFPTVPRGTGRVRNMPTAAHTKDMLDEAIAAYEKVGKEMKLI</sequence>
<comment type="cofactor">
    <cofactor evidence="1">
        <name>pyridoxal 5'-phosphate</name>
        <dbReference type="ChEBI" id="CHEBI:597326"/>
    </cofactor>
</comment>
<comment type="subunit">
    <text evidence="1">Homodimer.</text>
</comment>
<comment type="similarity">
    <text evidence="2">Belongs to the class-II pyridoxal-phosphate-dependent aminotransferase family.</text>
</comment>
<comment type="sequence caution" evidence="2">
    <conflict type="erroneous initiation">
        <sequence resource="EMBL-CDS" id="BAB41739"/>
    </conflict>
</comment>
<gene>
    <name type="ordered locus">SA0508</name>
</gene>